<evidence type="ECO:0000250" key="1">
    <source>
        <dbReference type="UniProtKB" id="O35710"/>
    </source>
</evidence>
<evidence type="ECO:0000250" key="2">
    <source>
        <dbReference type="UniProtKB" id="Q9UK39"/>
    </source>
</evidence>
<evidence type="ECO:0000269" key="3">
    <source>
    </source>
</evidence>
<evidence type="ECO:0000303" key="4">
    <source>
    </source>
</evidence>
<evidence type="ECO:0000305" key="5"/>
<proteinExistence type="evidence at transcript level"/>
<keyword id="KW-0090">Biological rhythms</keyword>
<keyword id="KW-0963">Cytoplasm</keyword>
<keyword id="KW-0378">Hydrolase</keyword>
<keyword id="KW-0460">Magnesium</keyword>
<keyword id="KW-0479">Metal-binding</keyword>
<keyword id="KW-0496">Mitochondrion</keyword>
<keyword id="KW-0539">Nucleus</keyword>
<keyword id="KW-1185">Reference proteome</keyword>
<keyword id="KW-0678">Repressor</keyword>
<keyword id="KW-0809">Transit peptide</keyword>
<organism>
    <name type="scientific">Xenopus laevis</name>
    <name type="common">African clawed frog</name>
    <dbReference type="NCBI Taxonomy" id="8355"/>
    <lineage>
        <taxon>Eukaryota</taxon>
        <taxon>Metazoa</taxon>
        <taxon>Chordata</taxon>
        <taxon>Craniata</taxon>
        <taxon>Vertebrata</taxon>
        <taxon>Euteleostomi</taxon>
        <taxon>Amphibia</taxon>
        <taxon>Batrachia</taxon>
        <taxon>Anura</taxon>
        <taxon>Pipoidea</taxon>
        <taxon>Pipidae</taxon>
        <taxon>Xenopodinae</taxon>
        <taxon>Xenopus</taxon>
        <taxon>Xenopus</taxon>
    </lineage>
</organism>
<dbReference type="EC" id="3.1.3.-" evidence="2"/>
<dbReference type="EMBL" id="U74761">
    <property type="protein sequence ID" value="AAB39495.1"/>
    <property type="molecule type" value="mRNA"/>
</dbReference>
<dbReference type="RefSeq" id="NP_001079281.1">
    <property type="nucleotide sequence ID" value="NM_001085812.1"/>
</dbReference>
<dbReference type="SMR" id="P79942"/>
<dbReference type="GeneID" id="378568"/>
<dbReference type="KEGG" id="xla:378568"/>
<dbReference type="AGR" id="Xenbase:XB-GENE-6252647"/>
<dbReference type="CTD" id="378568"/>
<dbReference type="Xenbase" id="XB-GENE-6252647">
    <property type="gene designation" value="noct.L"/>
</dbReference>
<dbReference type="OMA" id="RAACSMG"/>
<dbReference type="OrthoDB" id="276515at2759"/>
<dbReference type="BRENDA" id="3.1.13.4">
    <property type="organism ID" value="6725"/>
</dbReference>
<dbReference type="BRENDA" id="3.1.3.108">
    <property type="organism ID" value="6725"/>
</dbReference>
<dbReference type="Proteomes" id="UP000186698">
    <property type="component" value="Chromosome 1L"/>
</dbReference>
<dbReference type="Bgee" id="378568">
    <property type="expression patterns" value="Expressed in camera-type eye and 16 other cell types or tissues"/>
</dbReference>
<dbReference type="GO" id="GO:0005739">
    <property type="term" value="C:mitochondrion"/>
    <property type="evidence" value="ECO:0000250"/>
    <property type="project" value="UniProtKB"/>
</dbReference>
<dbReference type="GO" id="GO:0005634">
    <property type="term" value="C:nucleus"/>
    <property type="evidence" value="ECO:0007669"/>
    <property type="project" value="UniProtKB-SubCell"/>
</dbReference>
<dbReference type="GO" id="GO:0048471">
    <property type="term" value="C:perinuclear region of cytoplasm"/>
    <property type="evidence" value="ECO:0007669"/>
    <property type="project" value="UniProtKB-SubCell"/>
</dbReference>
<dbReference type="GO" id="GO:0000175">
    <property type="term" value="F:3'-5'-RNA exonuclease activity"/>
    <property type="evidence" value="ECO:0000318"/>
    <property type="project" value="GO_Central"/>
</dbReference>
<dbReference type="GO" id="GO:0046872">
    <property type="term" value="F:metal ion binding"/>
    <property type="evidence" value="ECO:0007669"/>
    <property type="project" value="UniProtKB-KW"/>
</dbReference>
<dbReference type="GO" id="GO:0019178">
    <property type="term" value="F:NADP phosphatase activity"/>
    <property type="evidence" value="ECO:0000250"/>
    <property type="project" value="UniProtKB"/>
</dbReference>
<dbReference type="GO" id="GO:0102757">
    <property type="term" value="F:NADPH phosphatase activity"/>
    <property type="evidence" value="ECO:0000250"/>
    <property type="project" value="UniProtKB"/>
</dbReference>
<dbReference type="GO" id="GO:0004535">
    <property type="term" value="F:poly(A)-specific ribonuclease activity"/>
    <property type="evidence" value="ECO:0007669"/>
    <property type="project" value="InterPro"/>
</dbReference>
<dbReference type="GO" id="GO:0007623">
    <property type="term" value="P:circadian rhythm"/>
    <property type="evidence" value="ECO:0007669"/>
    <property type="project" value="InterPro"/>
</dbReference>
<dbReference type="GO" id="GO:0006739">
    <property type="term" value="P:NADP metabolic process"/>
    <property type="evidence" value="ECO:0000250"/>
    <property type="project" value="UniProtKB"/>
</dbReference>
<dbReference type="CDD" id="cd09096">
    <property type="entry name" value="Deadenylase_nocturnin"/>
    <property type="match status" value="1"/>
</dbReference>
<dbReference type="FunFam" id="3.60.10.10:FF:000012">
    <property type="entry name" value="nocturnin isoform X2"/>
    <property type="match status" value="1"/>
</dbReference>
<dbReference type="Gene3D" id="3.60.10.10">
    <property type="entry name" value="Endonuclease/exonuclease/phosphatase"/>
    <property type="match status" value="1"/>
</dbReference>
<dbReference type="InterPro" id="IPR050410">
    <property type="entry name" value="CCR4/nocturin_mRNA_transcr"/>
</dbReference>
<dbReference type="InterPro" id="IPR034965">
    <property type="entry name" value="Deadenylase_nocturnin"/>
</dbReference>
<dbReference type="InterPro" id="IPR036691">
    <property type="entry name" value="Endo/exonu/phosph_ase_sf"/>
</dbReference>
<dbReference type="InterPro" id="IPR005135">
    <property type="entry name" value="Endo/exonuclease/phosphatase"/>
</dbReference>
<dbReference type="PANTHER" id="PTHR12121">
    <property type="entry name" value="CARBON CATABOLITE REPRESSOR PROTEIN 4"/>
    <property type="match status" value="1"/>
</dbReference>
<dbReference type="PANTHER" id="PTHR12121:SF45">
    <property type="entry name" value="NOCTURNIN"/>
    <property type="match status" value="1"/>
</dbReference>
<dbReference type="Pfam" id="PF03372">
    <property type="entry name" value="Exo_endo_phos"/>
    <property type="match status" value="1"/>
</dbReference>
<dbReference type="SUPFAM" id="SSF56219">
    <property type="entry name" value="DNase I-like"/>
    <property type="match status" value="1"/>
</dbReference>
<feature type="transit peptide" description="Mitochondrion" evidence="5">
    <location>
        <begin position="1"/>
        <end status="unknown"/>
    </location>
</feature>
<feature type="chain" id="PRO_0000218571" description="Nocturnin">
    <location>
        <begin status="unknown"/>
        <end position="388"/>
    </location>
</feature>
<feature type="binding site" evidence="2">
    <location>
        <position position="152"/>
    </location>
    <ligand>
        <name>Mg(2+)</name>
        <dbReference type="ChEBI" id="CHEBI:18420"/>
    </ligand>
</feature>
<feature type="binding site" evidence="2">
    <location>
        <position position="152"/>
    </location>
    <ligand>
        <name>substrate</name>
    </ligand>
</feature>
<feature type="binding site" evidence="2">
    <location>
        <begin position="176"/>
        <end position="178"/>
    </location>
    <ligand>
        <name>substrate</name>
    </ligand>
</feature>
<feature type="binding site" evidence="2">
    <location>
        <position position="220"/>
    </location>
    <ligand>
        <name>substrate</name>
    </ligand>
</feature>
<feature type="binding site" evidence="2">
    <location>
        <begin position="243"/>
        <end position="246"/>
    </location>
    <ligand>
        <name>substrate</name>
    </ligand>
</feature>
<feature type="binding site" evidence="2">
    <location>
        <begin position="281"/>
        <end position="283"/>
    </location>
    <ligand>
        <name>substrate</name>
    </ligand>
</feature>
<feature type="binding site" evidence="2">
    <location>
        <position position="371"/>
    </location>
    <ligand>
        <name>substrate</name>
    </ligand>
</feature>
<gene>
    <name evidence="2" type="primary">noct</name>
    <name type="synonym">ccrn4l</name>
</gene>
<name>NOCT_XENLA</name>
<protein>
    <recommendedName>
        <fullName evidence="4">Nocturnin</fullName>
        <ecNumber evidence="2">3.1.3.-</ecNumber>
    </recommendedName>
    <alternativeName>
        <fullName>Carbon catabolite repression 4-like protein</fullName>
    </alternativeName>
    <alternativeName>
        <fullName>Rhythmic message 1</fullName>
        <shortName>RM1</shortName>
    </alternativeName>
</protein>
<comment type="function">
    <text evidence="2 3">Phosphatase which catalyzes the conversion of NADP(+) to NAD(+) and of NADPH to NADH (By similarity). Shows a small preference for NADPH over NADP(+) (By similarity). Component of the circadian clock or downstream effector of clock function (PubMed:12573214). Exhibits a high amplitude circadian rhythm with maximal levels in early evening (PubMed:12573214). In constant darkness or constant light, the amplitude of the rhythm decreases (PubMed:12573214).</text>
</comment>
<comment type="catalytic activity">
    <reaction evidence="2">
        <text>NADP(+) + H2O = phosphate + NAD(+)</text>
        <dbReference type="Rhea" id="RHEA:28050"/>
        <dbReference type="ChEBI" id="CHEBI:15377"/>
        <dbReference type="ChEBI" id="CHEBI:43474"/>
        <dbReference type="ChEBI" id="CHEBI:57540"/>
        <dbReference type="ChEBI" id="CHEBI:58349"/>
    </reaction>
    <physiologicalReaction direction="left-to-right" evidence="2">
        <dbReference type="Rhea" id="RHEA:28051"/>
    </physiologicalReaction>
</comment>
<comment type="catalytic activity">
    <reaction evidence="2">
        <text>NADPH + H2O = phosphate + NADH</text>
        <dbReference type="Rhea" id="RHEA:60664"/>
        <dbReference type="ChEBI" id="CHEBI:15377"/>
        <dbReference type="ChEBI" id="CHEBI:43474"/>
        <dbReference type="ChEBI" id="CHEBI:57783"/>
        <dbReference type="ChEBI" id="CHEBI:57945"/>
    </reaction>
    <physiologicalReaction direction="left-to-right" evidence="2">
        <dbReference type="Rhea" id="RHEA:60665"/>
    </physiologicalReaction>
</comment>
<comment type="cofactor">
    <cofactor evidence="3">
        <name>Mg(2+)</name>
        <dbReference type="ChEBI" id="CHEBI:18420"/>
    </cofactor>
    <text evidence="2">Binds 2 magnesium ions, but the ions are only loosely bound to the protein.</text>
</comment>
<comment type="subcellular location">
    <subcellularLocation>
        <location evidence="1">Cytoplasm</location>
    </subcellularLocation>
    <subcellularLocation>
        <location evidence="1">Nucleus</location>
    </subcellularLocation>
    <subcellularLocation>
        <location evidence="1">Cytoplasm</location>
        <location evidence="1">Perinuclear region</location>
    </subcellularLocation>
    <subcellularLocation>
        <location evidence="2">Mitochondrion</location>
    </subcellularLocation>
</comment>
<comment type="tissue specificity">
    <text>Expressed only in the photoreceptors of the retina. Expression is controlled by the retinal circadian clock.</text>
</comment>
<comment type="similarity">
    <text evidence="5">Belongs to the CCR4/nocturin family.</text>
</comment>
<comment type="caution">
    <text evidence="1 2 3">Was initially shown to have low deadenylase activity that was lost when the metal-binding Glu was mutated (PubMed:12573214). Later studies showed that the purified protein lacked deadenylase activity (By similarity). Was subsequently shown to act as a phosphatase (By similarity).</text>
</comment>
<reference key="1">
    <citation type="journal article" date="1996" name="Proc. Natl. Acad. Sci. U.S.A.">
        <title>Identification of a novel vertebrate circadian clock-regulated gene encoding the protein nocturnin.</title>
        <authorList>
            <person name="Green C.B."/>
            <person name="Besharse J.C."/>
        </authorList>
    </citation>
    <scope>NUCLEOTIDE SEQUENCE [MRNA]</scope>
    <source>
        <tissue>Retinal photoreceptor</tissue>
    </source>
</reference>
<reference key="2">
    <citation type="journal article" date="2003" name="Curr. Biol.">
        <title>Nocturnin, a deadenylase in Xenopus laevis retina: a mechanism for posttranscriptional control of circadian-related mRNA.</title>
        <authorList>
            <person name="Baggs J.E."/>
            <person name="Green C.B."/>
        </authorList>
    </citation>
    <scope>FUNCTION</scope>
    <scope>COFACTOR</scope>
</reference>
<sequence>MDAQLTYTMGLLEQGYLSARVCSMGNSTSRLYSALAKTLSSSAAVSQELLEASQHDQSEPLDPKELLDECQVALQDRPARLHRDFFSLRSESSSQQPRTFRVMQWNILAQALGEGKDNFIMCPMEALKWEERKYLILEEILMYQPDVLCLQEVDHYFDTFQPILSRLGYQCTFLAKPWSPCLDVEHNNGPDGCALFFLQDRFQLVNSAKIRLSARTLKTNQVAIAETLQCCETGRQLCFAVTHLKARTGWERFRLAQGSDLLDNLESITQGATVPLIICGDFNADPTEEVYKRFASSSLNLNSAYKLLSEDGESEPPYTTWKIRTTGESCHTLDYIWYSQHALRVNAALGLPTEEQIGPNRLPSFNYPSDHLSLVCDFSFNEDPARLL</sequence>
<accession>P79942</accession>